<reference key="1">
    <citation type="journal article" date="2008" name="J. Bacteriol.">
        <title>Complete genome sequence of uropathogenic Proteus mirabilis, a master of both adherence and motility.</title>
        <authorList>
            <person name="Pearson M.M."/>
            <person name="Sebaihia M."/>
            <person name="Churcher C."/>
            <person name="Quail M.A."/>
            <person name="Seshasayee A.S."/>
            <person name="Luscombe N.M."/>
            <person name="Abdellah Z."/>
            <person name="Arrosmith C."/>
            <person name="Atkin B."/>
            <person name="Chillingworth T."/>
            <person name="Hauser H."/>
            <person name="Jagels K."/>
            <person name="Moule S."/>
            <person name="Mungall K."/>
            <person name="Norbertczak H."/>
            <person name="Rabbinowitsch E."/>
            <person name="Walker D."/>
            <person name="Whithead S."/>
            <person name="Thomson N.R."/>
            <person name="Rather P.N."/>
            <person name="Parkhill J."/>
            <person name="Mobley H.L.T."/>
        </authorList>
    </citation>
    <scope>NUCLEOTIDE SEQUENCE [LARGE SCALE GENOMIC DNA]</scope>
    <source>
        <strain>HI4320</strain>
    </source>
</reference>
<accession>B4F1J2</accession>
<organism>
    <name type="scientific">Proteus mirabilis (strain HI4320)</name>
    <dbReference type="NCBI Taxonomy" id="529507"/>
    <lineage>
        <taxon>Bacteria</taxon>
        <taxon>Pseudomonadati</taxon>
        <taxon>Pseudomonadota</taxon>
        <taxon>Gammaproteobacteria</taxon>
        <taxon>Enterobacterales</taxon>
        <taxon>Morganellaceae</taxon>
        <taxon>Proteus</taxon>
    </lineage>
</organism>
<name>RL29_PROMH</name>
<feature type="chain" id="PRO_1000121800" description="Large ribosomal subunit protein uL29">
    <location>
        <begin position="1"/>
        <end position="63"/>
    </location>
</feature>
<keyword id="KW-1185">Reference proteome</keyword>
<keyword id="KW-0687">Ribonucleoprotein</keyword>
<keyword id="KW-0689">Ribosomal protein</keyword>
<evidence type="ECO:0000255" key="1">
    <source>
        <dbReference type="HAMAP-Rule" id="MF_00374"/>
    </source>
</evidence>
<evidence type="ECO:0000305" key="2"/>
<comment type="similarity">
    <text evidence="1">Belongs to the universal ribosomal protein uL29 family.</text>
</comment>
<protein>
    <recommendedName>
        <fullName evidence="1">Large ribosomal subunit protein uL29</fullName>
    </recommendedName>
    <alternativeName>
        <fullName evidence="2">50S ribosomal protein L29</fullName>
    </alternativeName>
</protein>
<gene>
    <name evidence="1" type="primary">rpmC</name>
    <name type="ordered locus">PMI3263</name>
</gene>
<dbReference type="EMBL" id="AM942759">
    <property type="protein sequence ID" value="CAR46393.1"/>
    <property type="molecule type" value="Genomic_DNA"/>
</dbReference>
<dbReference type="RefSeq" id="WP_004238624.1">
    <property type="nucleotide sequence ID" value="NC_010554.1"/>
</dbReference>
<dbReference type="SMR" id="B4F1J2"/>
<dbReference type="EnsemblBacteria" id="CAR46393">
    <property type="protein sequence ID" value="CAR46393"/>
    <property type="gene ID" value="PMI3263"/>
</dbReference>
<dbReference type="GeneID" id="93395996"/>
<dbReference type="KEGG" id="pmr:PMI3263"/>
<dbReference type="eggNOG" id="COG0255">
    <property type="taxonomic scope" value="Bacteria"/>
</dbReference>
<dbReference type="HOGENOM" id="CLU_158491_1_2_6"/>
<dbReference type="Proteomes" id="UP000008319">
    <property type="component" value="Chromosome"/>
</dbReference>
<dbReference type="GO" id="GO:0022625">
    <property type="term" value="C:cytosolic large ribosomal subunit"/>
    <property type="evidence" value="ECO:0007669"/>
    <property type="project" value="TreeGrafter"/>
</dbReference>
<dbReference type="GO" id="GO:0003735">
    <property type="term" value="F:structural constituent of ribosome"/>
    <property type="evidence" value="ECO:0007669"/>
    <property type="project" value="InterPro"/>
</dbReference>
<dbReference type="GO" id="GO:0006412">
    <property type="term" value="P:translation"/>
    <property type="evidence" value="ECO:0007669"/>
    <property type="project" value="UniProtKB-UniRule"/>
</dbReference>
<dbReference type="CDD" id="cd00427">
    <property type="entry name" value="Ribosomal_L29_HIP"/>
    <property type="match status" value="1"/>
</dbReference>
<dbReference type="Gene3D" id="6.10.140.1970">
    <property type="match status" value="1"/>
</dbReference>
<dbReference type="HAMAP" id="MF_00374">
    <property type="entry name" value="Ribosomal_uL29"/>
    <property type="match status" value="1"/>
</dbReference>
<dbReference type="InterPro" id="IPR050063">
    <property type="entry name" value="Ribosomal_protein_uL29"/>
</dbReference>
<dbReference type="InterPro" id="IPR001854">
    <property type="entry name" value="Ribosomal_uL29"/>
</dbReference>
<dbReference type="InterPro" id="IPR018254">
    <property type="entry name" value="Ribosomal_uL29_CS"/>
</dbReference>
<dbReference type="InterPro" id="IPR036049">
    <property type="entry name" value="Ribosomal_uL29_sf"/>
</dbReference>
<dbReference type="NCBIfam" id="TIGR00012">
    <property type="entry name" value="L29"/>
    <property type="match status" value="1"/>
</dbReference>
<dbReference type="PANTHER" id="PTHR10916">
    <property type="entry name" value="60S RIBOSOMAL PROTEIN L35/50S RIBOSOMAL PROTEIN L29"/>
    <property type="match status" value="1"/>
</dbReference>
<dbReference type="PANTHER" id="PTHR10916:SF0">
    <property type="entry name" value="LARGE RIBOSOMAL SUBUNIT PROTEIN UL29C"/>
    <property type="match status" value="1"/>
</dbReference>
<dbReference type="Pfam" id="PF00831">
    <property type="entry name" value="Ribosomal_L29"/>
    <property type="match status" value="1"/>
</dbReference>
<dbReference type="SUPFAM" id="SSF46561">
    <property type="entry name" value="Ribosomal protein L29 (L29p)"/>
    <property type="match status" value="1"/>
</dbReference>
<dbReference type="PROSITE" id="PS00579">
    <property type="entry name" value="RIBOSOMAL_L29"/>
    <property type="match status" value="1"/>
</dbReference>
<proteinExistence type="inferred from homology"/>
<sequence length="63" mass="7273">MKAKELREKSVEELNTELLNLLREQFNLRMQAASGQLQQSHLLKQVRRNIARVKTLLTEKAGA</sequence>